<evidence type="ECO:0000255" key="1">
    <source>
        <dbReference type="HAMAP-Rule" id="MF_00140"/>
    </source>
</evidence>
<protein>
    <recommendedName>
        <fullName evidence="1">Tryptophan--tRNA ligase</fullName>
        <ecNumber evidence="1">6.1.1.2</ecNumber>
    </recommendedName>
    <alternativeName>
        <fullName evidence="1">Tryptophanyl-tRNA synthetase</fullName>
        <shortName evidence="1">TrpRS</shortName>
    </alternativeName>
</protein>
<keyword id="KW-0030">Aminoacyl-tRNA synthetase</keyword>
<keyword id="KW-0067">ATP-binding</keyword>
<keyword id="KW-0963">Cytoplasm</keyword>
<keyword id="KW-0436">Ligase</keyword>
<keyword id="KW-0547">Nucleotide-binding</keyword>
<keyword id="KW-0648">Protein biosynthesis</keyword>
<sequence length="336" mass="37622">MSKKRVLTGVTTTGIPHLGNYVGAIRPAVRAAQNPDTESFLFLADYHGIIKCHEPEMIHQSTQAVAATWLACGLDPERTTFYRQSDIPEVMELNWILTCITAKGLMNRAHAYKAAVQANAENGQEDPDFGVEMGLYSYPILMTADILMFNAHEVPVGRDQIQHVEMARDIAGRFNHRFRELFTLPEVKIDENVELLVGLDGRKMSKSYGNTIPLWENDKKTQKSVNKIITNMKEPGEPKKPDESPLFEIYKAFSTPSETAEFTKMLADGLAWGEAKKLLAAKINAELAEPRERYNELTADPSQIEEILQAGAQKARKEARELLGKVRDAVGIRPLK</sequence>
<gene>
    <name evidence="1" type="primary">trpS</name>
    <name type="ordered locus">NMA1682</name>
</gene>
<comment type="function">
    <text evidence="1">Catalyzes the attachment of tryptophan to tRNA(Trp).</text>
</comment>
<comment type="catalytic activity">
    <reaction evidence="1">
        <text>tRNA(Trp) + L-tryptophan + ATP = L-tryptophyl-tRNA(Trp) + AMP + diphosphate + H(+)</text>
        <dbReference type="Rhea" id="RHEA:24080"/>
        <dbReference type="Rhea" id="RHEA-COMP:9671"/>
        <dbReference type="Rhea" id="RHEA-COMP:9705"/>
        <dbReference type="ChEBI" id="CHEBI:15378"/>
        <dbReference type="ChEBI" id="CHEBI:30616"/>
        <dbReference type="ChEBI" id="CHEBI:33019"/>
        <dbReference type="ChEBI" id="CHEBI:57912"/>
        <dbReference type="ChEBI" id="CHEBI:78442"/>
        <dbReference type="ChEBI" id="CHEBI:78535"/>
        <dbReference type="ChEBI" id="CHEBI:456215"/>
        <dbReference type="EC" id="6.1.1.2"/>
    </reaction>
</comment>
<comment type="subunit">
    <text evidence="1">Homodimer.</text>
</comment>
<comment type="subcellular location">
    <subcellularLocation>
        <location evidence="1">Cytoplasm</location>
    </subcellularLocation>
</comment>
<comment type="similarity">
    <text evidence="1">Belongs to the class-I aminoacyl-tRNA synthetase family.</text>
</comment>
<accession>Q9JTQ0</accession>
<accession>A1ISQ1</accession>
<reference key="1">
    <citation type="journal article" date="2000" name="Nature">
        <title>Complete DNA sequence of a serogroup A strain of Neisseria meningitidis Z2491.</title>
        <authorList>
            <person name="Parkhill J."/>
            <person name="Achtman M."/>
            <person name="James K.D."/>
            <person name="Bentley S.D."/>
            <person name="Churcher C.M."/>
            <person name="Klee S.R."/>
            <person name="Morelli G."/>
            <person name="Basham D."/>
            <person name="Brown D."/>
            <person name="Chillingworth T."/>
            <person name="Davies R.M."/>
            <person name="Davis P."/>
            <person name="Devlin K."/>
            <person name="Feltwell T."/>
            <person name="Hamlin N."/>
            <person name="Holroyd S."/>
            <person name="Jagels K."/>
            <person name="Leather S."/>
            <person name="Moule S."/>
            <person name="Mungall K.L."/>
            <person name="Quail M.A."/>
            <person name="Rajandream M.A."/>
            <person name="Rutherford K.M."/>
            <person name="Simmonds M."/>
            <person name="Skelton J."/>
            <person name="Whitehead S."/>
            <person name="Spratt B.G."/>
            <person name="Barrell B.G."/>
        </authorList>
    </citation>
    <scope>NUCLEOTIDE SEQUENCE [LARGE SCALE GENOMIC DNA]</scope>
    <source>
        <strain>DSM 15465 / Z2491</strain>
    </source>
</reference>
<feature type="chain" id="PRO_0000136653" description="Tryptophan--tRNA ligase">
    <location>
        <begin position="1"/>
        <end position="336"/>
    </location>
</feature>
<feature type="short sequence motif" description="'HIGH' region" evidence="1">
    <location>
        <begin position="12"/>
        <end position="20"/>
    </location>
</feature>
<feature type="short sequence motif" description="'KMSKS' region" evidence="1">
    <location>
        <begin position="203"/>
        <end position="207"/>
    </location>
</feature>
<feature type="binding site" evidence="1">
    <location>
        <begin position="11"/>
        <end position="13"/>
    </location>
    <ligand>
        <name>ATP</name>
        <dbReference type="ChEBI" id="CHEBI:30616"/>
    </ligand>
</feature>
<feature type="binding site" evidence="1">
    <location>
        <begin position="19"/>
        <end position="20"/>
    </location>
    <ligand>
        <name>ATP</name>
        <dbReference type="ChEBI" id="CHEBI:30616"/>
    </ligand>
</feature>
<feature type="binding site" evidence="1">
    <location>
        <position position="145"/>
    </location>
    <ligand>
        <name>L-tryptophan</name>
        <dbReference type="ChEBI" id="CHEBI:57912"/>
    </ligand>
</feature>
<feature type="binding site" evidence="1">
    <location>
        <begin position="157"/>
        <end position="159"/>
    </location>
    <ligand>
        <name>ATP</name>
        <dbReference type="ChEBI" id="CHEBI:30616"/>
    </ligand>
</feature>
<feature type="binding site" evidence="1">
    <location>
        <position position="196"/>
    </location>
    <ligand>
        <name>ATP</name>
        <dbReference type="ChEBI" id="CHEBI:30616"/>
    </ligand>
</feature>
<feature type="binding site" evidence="1">
    <location>
        <begin position="203"/>
        <end position="207"/>
    </location>
    <ligand>
        <name>ATP</name>
        <dbReference type="ChEBI" id="CHEBI:30616"/>
    </ligand>
</feature>
<organism>
    <name type="scientific">Neisseria meningitidis serogroup A / serotype 4A (strain DSM 15465 / Z2491)</name>
    <dbReference type="NCBI Taxonomy" id="122587"/>
    <lineage>
        <taxon>Bacteria</taxon>
        <taxon>Pseudomonadati</taxon>
        <taxon>Pseudomonadota</taxon>
        <taxon>Betaproteobacteria</taxon>
        <taxon>Neisseriales</taxon>
        <taxon>Neisseriaceae</taxon>
        <taxon>Neisseria</taxon>
    </lineage>
</organism>
<proteinExistence type="inferred from homology"/>
<dbReference type="EC" id="6.1.1.2" evidence="1"/>
<dbReference type="EMBL" id="AL157959">
    <property type="protein sequence ID" value="CAM08813.1"/>
    <property type="molecule type" value="Genomic_DNA"/>
</dbReference>
<dbReference type="PIR" id="E81863">
    <property type="entry name" value="E81863"/>
</dbReference>
<dbReference type="RefSeq" id="WP_002246991.1">
    <property type="nucleotide sequence ID" value="NC_003116.1"/>
</dbReference>
<dbReference type="SMR" id="Q9JTQ0"/>
<dbReference type="EnsemblBacteria" id="CAM08813">
    <property type="protein sequence ID" value="CAM08813"/>
    <property type="gene ID" value="NMA1682"/>
</dbReference>
<dbReference type="KEGG" id="nma:NMA1682"/>
<dbReference type="HOGENOM" id="CLU_029244_5_0_4"/>
<dbReference type="Proteomes" id="UP000000626">
    <property type="component" value="Chromosome"/>
</dbReference>
<dbReference type="GO" id="GO:0005829">
    <property type="term" value="C:cytosol"/>
    <property type="evidence" value="ECO:0007669"/>
    <property type="project" value="TreeGrafter"/>
</dbReference>
<dbReference type="GO" id="GO:0005524">
    <property type="term" value="F:ATP binding"/>
    <property type="evidence" value="ECO:0007669"/>
    <property type="project" value="UniProtKB-UniRule"/>
</dbReference>
<dbReference type="GO" id="GO:0004830">
    <property type="term" value="F:tryptophan-tRNA ligase activity"/>
    <property type="evidence" value="ECO:0007669"/>
    <property type="project" value="UniProtKB-UniRule"/>
</dbReference>
<dbReference type="GO" id="GO:0006436">
    <property type="term" value="P:tryptophanyl-tRNA aminoacylation"/>
    <property type="evidence" value="ECO:0007669"/>
    <property type="project" value="UniProtKB-UniRule"/>
</dbReference>
<dbReference type="CDD" id="cd00806">
    <property type="entry name" value="TrpRS_core"/>
    <property type="match status" value="1"/>
</dbReference>
<dbReference type="FunFam" id="1.10.240.10:FF:000005">
    <property type="entry name" value="Tryptophan--tRNA ligase"/>
    <property type="match status" value="1"/>
</dbReference>
<dbReference type="FunFam" id="3.40.50.620:FF:000144">
    <property type="entry name" value="Tryptophan--tRNA ligase"/>
    <property type="match status" value="1"/>
</dbReference>
<dbReference type="Gene3D" id="3.40.50.620">
    <property type="entry name" value="HUPs"/>
    <property type="match status" value="1"/>
</dbReference>
<dbReference type="Gene3D" id="1.10.240.10">
    <property type="entry name" value="Tyrosyl-Transfer RNA Synthetase"/>
    <property type="match status" value="1"/>
</dbReference>
<dbReference type="HAMAP" id="MF_00140_B">
    <property type="entry name" value="Trp_tRNA_synth_B"/>
    <property type="match status" value="1"/>
</dbReference>
<dbReference type="InterPro" id="IPR002305">
    <property type="entry name" value="aa-tRNA-synth_Ic"/>
</dbReference>
<dbReference type="InterPro" id="IPR014729">
    <property type="entry name" value="Rossmann-like_a/b/a_fold"/>
</dbReference>
<dbReference type="InterPro" id="IPR002306">
    <property type="entry name" value="Trp-tRNA-ligase"/>
</dbReference>
<dbReference type="InterPro" id="IPR024109">
    <property type="entry name" value="Trp-tRNA-ligase_bac-type"/>
</dbReference>
<dbReference type="InterPro" id="IPR050203">
    <property type="entry name" value="Trp-tRNA_synthetase"/>
</dbReference>
<dbReference type="NCBIfam" id="TIGR00233">
    <property type="entry name" value="trpS"/>
    <property type="match status" value="1"/>
</dbReference>
<dbReference type="PANTHER" id="PTHR43766">
    <property type="entry name" value="TRYPTOPHAN--TRNA LIGASE, MITOCHONDRIAL"/>
    <property type="match status" value="1"/>
</dbReference>
<dbReference type="PANTHER" id="PTHR43766:SF1">
    <property type="entry name" value="TRYPTOPHAN--TRNA LIGASE, MITOCHONDRIAL"/>
    <property type="match status" value="1"/>
</dbReference>
<dbReference type="Pfam" id="PF00579">
    <property type="entry name" value="tRNA-synt_1b"/>
    <property type="match status" value="1"/>
</dbReference>
<dbReference type="PRINTS" id="PR01039">
    <property type="entry name" value="TRNASYNTHTRP"/>
</dbReference>
<dbReference type="SUPFAM" id="SSF52374">
    <property type="entry name" value="Nucleotidylyl transferase"/>
    <property type="match status" value="1"/>
</dbReference>
<name>SYW_NEIMA</name>